<sequence>MARSVKKGPFVDDHLMKKVLSAKAEGSKKPIKTWSRRSMVLPDMVGITFNVHNGRQFVPVYVTENHIGYKLGEFAPTRTFKGHKGSVQKKG</sequence>
<organism>
    <name type="scientific">Sulfurimonas denitrificans (strain ATCC 33889 / DSM 1251)</name>
    <name type="common">Thiomicrospira denitrificans (strain ATCC 33889 / DSM 1251)</name>
    <dbReference type="NCBI Taxonomy" id="326298"/>
    <lineage>
        <taxon>Bacteria</taxon>
        <taxon>Pseudomonadati</taxon>
        <taxon>Campylobacterota</taxon>
        <taxon>Epsilonproteobacteria</taxon>
        <taxon>Campylobacterales</taxon>
        <taxon>Sulfurimonadaceae</taxon>
        <taxon>Sulfurimonas</taxon>
    </lineage>
</organism>
<reference key="1">
    <citation type="journal article" date="2008" name="Appl. Environ. Microbiol.">
        <title>Genome of the epsilonproteobacterial chemolithoautotroph Sulfurimonas denitrificans.</title>
        <authorList>
            <person name="Sievert S.M."/>
            <person name="Scott K.M."/>
            <person name="Klotz M.G."/>
            <person name="Chain P.S.G."/>
            <person name="Hauser L.J."/>
            <person name="Hemp J."/>
            <person name="Huegler M."/>
            <person name="Land M."/>
            <person name="Lapidus A."/>
            <person name="Larimer F.W."/>
            <person name="Lucas S."/>
            <person name="Malfatti S.A."/>
            <person name="Meyer F."/>
            <person name="Paulsen I.T."/>
            <person name="Ren Q."/>
            <person name="Simon J."/>
            <person name="Bailey K."/>
            <person name="Diaz E."/>
            <person name="Fitzpatrick K.A."/>
            <person name="Glover B."/>
            <person name="Gwatney N."/>
            <person name="Korajkic A."/>
            <person name="Long A."/>
            <person name="Mobberley J.M."/>
            <person name="Pantry S.N."/>
            <person name="Pazder G."/>
            <person name="Peterson S."/>
            <person name="Quintanilla J.D."/>
            <person name="Sprinkle R."/>
            <person name="Stephens J."/>
            <person name="Thomas P."/>
            <person name="Vaughn R."/>
            <person name="Weber M.J."/>
            <person name="Wooten L.L."/>
        </authorList>
    </citation>
    <scope>NUCLEOTIDE SEQUENCE [LARGE SCALE GENOMIC DNA]</scope>
    <source>
        <strain>ATCC 33889 / DSM 1251</strain>
    </source>
</reference>
<keyword id="KW-1185">Reference proteome</keyword>
<keyword id="KW-0687">Ribonucleoprotein</keyword>
<keyword id="KW-0689">Ribosomal protein</keyword>
<keyword id="KW-0694">RNA-binding</keyword>
<keyword id="KW-0699">rRNA-binding</keyword>
<accession>Q30TW0</accession>
<name>RS19_SULDN</name>
<feature type="chain" id="PRO_0000265460" description="Small ribosomal subunit protein uS19">
    <location>
        <begin position="1"/>
        <end position="91"/>
    </location>
</feature>
<proteinExistence type="inferred from homology"/>
<evidence type="ECO:0000255" key="1">
    <source>
        <dbReference type="HAMAP-Rule" id="MF_00531"/>
    </source>
</evidence>
<evidence type="ECO:0000305" key="2"/>
<dbReference type="EMBL" id="CP000153">
    <property type="protein sequence ID" value="ABB43571.1"/>
    <property type="molecule type" value="Genomic_DNA"/>
</dbReference>
<dbReference type="RefSeq" id="WP_011371926.1">
    <property type="nucleotide sequence ID" value="NC_007575.1"/>
</dbReference>
<dbReference type="SMR" id="Q30TW0"/>
<dbReference type="STRING" id="326298.Suden_0290"/>
<dbReference type="KEGG" id="tdn:Suden_0290"/>
<dbReference type="eggNOG" id="COG0185">
    <property type="taxonomic scope" value="Bacteria"/>
</dbReference>
<dbReference type="HOGENOM" id="CLU_144911_0_1_7"/>
<dbReference type="OrthoDB" id="9797833at2"/>
<dbReference type="Proteomes" id="UP000002714">
    <property type="component" value="Chromosome"/>
</dbReference>
<dbReference type="GO" id="GO:0005737">
    <property type="term" value="C:cytoplasm"/>
    <property type="evidence" value="ECO:0007669"/>
    <property type="project" value="UniProtKB-ARBA"/>
</dbReference>
<dbReference type="GO" id="GO:0015935">
    <property type="term" value="C:small ribosomal subunit"/>
    <property type="evidence" value="ECO:0007669"/>
    <property type="project" value="InterPro"/>
</dbReference>
<dbReference type="GO" id="GO:0019843">
    <property type="term" value="F:rRNA binding"/>
    <property type="evidence" value="ECO:0007669"/>
    <property type="project" value="UniProtKB-UniRule"/>
</dbReference>
<dbReference type="GO" id="GO:0003735">
    <property type="term" value="F:structural constituent of ribosome"/>
    <property type="evidence" value="ECO:0007669"/>
    <property type="project" value="InterPro"/>
</dbReference>
<dbReference type="GO" id="GO:0000028">
    <property type="term" value="P:ribosomal small subunit assembly"/>
    <property type="evidence" value="ECO:0007669"/>
    <property type="project" value="TreeGrafter"/>
</dbReference>
<dbReference type="GO" id="GO:0006412">
    <property type="term" value="P:translation"/>
    <property type="evidence" value="ECO:0007669"/>
    <property type="project" value="UniProtKB-UniRule"/>
</dbReference>
<dbReference type="FunFam" id="3.30.860.10:FF:000001">
    <property type="entry name" value="30S ribosomal protein S19"/>
    <property type="match status" value="1"/>
</dbReference>
<dbReference type="Gene3D" id="3.30.860.10">
    <property type="entry name" value="30s Ribosomal Protein S19, Chain A"/>
    <property type="match status" value="1"/>
</dbReference>
<dbReference type="HAMAP" id="MF_00531">
    <property type="entry name" value="Ribosomal_uS19"/>
    <property type="match status" value="1"/>
</dbReference>
<dbReference type="InterPro" id="IPR002222">
    <property type="entry name" value="Ribosomal_uS19"/>
</dbReference>
<dbReference type="InterPro" id="IPR005732">
    <property type="entry name" value="Ribosomal_uS19_bac-type"/>
</dbReference>
<dbReference type="InterPro" id="IPR020934">
    <property type="entry name" value="Ribosomal_uS19_CS"/>
</dbReference>
<dbReference type="InterPro" id="IPR023575">
    <property type="entry name" value="Ribosomal_uS19_SF"/>
</dbReference>
<dbReference type="NCBIfam" id="TIGR01050">
    <property type="entry name" value="rpsS_bact"/>
    <property type="match status" value="1"/>
</dbReference>
<dbReference type="PANTHER" id="PTHR11880">
    <property type="entry name" value="RIBOSOMAL PROTEIN S19P FAMILY MEMBER"/>
    <property type="match status" value="1"/>
</dbReference>
<dbReference type="PANTHER" id="PTHR11880:SF8">
    <property type="entry name" value="SMALL RIBOSOMAL SUBUNIT PROTEIN US19M"/>
    <property type="match status" value="1"/>
</dbReference>
<dbReference type="Pfam" id="PF00203">
    <property type="entry name" value="Ribosomal_S19"/>
    <property type="match status" value="1"/>
</dbReference>
<dbReference type="PIRSF" id="PIRSF002144">
    <property type="entry name" value="Ribosomal_S19"/>
    <property type="match status" value="1"/>
</dbReference>
<dbReference type="PRINTS" id="PR00975">
    <property type="entry name" value="RIBOSOMALS19"/>
</dbReference>
<dbReference type="SUPFAM" id="SSF54570">
    <property type="entry name" value="Ribosomal protein S19"/>
    <property type="match status" value="1"/>
</dbReference>
<dbReference type="PROSITE" id="PS00323">
    <property type="entry name" value="RIBOSOMAL_S19"/>
    <property type="match status" value="1"/>
</dbReference>
<gene>
    <name evidence="1" type="primary">rpsS</name>
    <name type="ordered locus">Suden_0290</name>
</gene>
<comment type="function">
    <text evidence="1">Protein S19 forms a complex with S13 that binds strongly to the 16S ribosomal RNA.</text>
</comment>
<comment type="similarity">
    <text evidence="1">Belongs to the universal ribosomal protein uS19 family.</text>
</comment>
<protein>
    <recommendedName>
        <fullName evidence="1">Small ribosomal subunit protein uS19</fullName>
    </recommendedName>
    <alternativeName>
        <fullName evidence="2">30S ribosomal protein S19</fullName>
    </alternativeName>
</protein>